<reference key="1">
    <citation type="journal article" date="1997" name="Nature">
        <title>The complete genome sequence of the hyperthermophilic, sulphate-reducing archaeon Archaeoglobus fulgidus.</title>
        <authorList>
            <person name="Klenk H.-P."/>
            <person name="Clayton R.A."/>
            <person name="Tomb J.-F."/>
            <person name="White O."/>
            <person name="Nelson K.E."/>
            <person name="Ketchum K.A."/>
            <person name="Dodson R.J."/>
            <person name="Gwinn M.L."/>
            <person name="Hickey E.K."/>
            <person name="Peterson J.D."/>
            <person name="Richardson D.L."/>
            <person name="Kerlavage A.R."/>
            <person name="Graham D.E."/>
            <person name="Kyrpides N.C."/>
            <person name="Fleischmann R.D."/>
            <person name="Quackenbush J."/>
            <person name="Lee N.H."/>
            <person name="Sutton G.G."/>
            <person name="Gill S.R."/>
            <person name="Kirkness E.F."/>
            <person name="Dougherty B.A."/>
            <person name="McKenney K."/>
            <person name="Adams M.D."/>
            <person name="Loftus B.J."/>
            <person name="Peterson S.N."/>
            <person name="Reich C.I."/>
            <person name="McNeil L.K."/>
            <person name="Badger J.H."/>
            <person name="Glodek A."/>
            <person name="Zhou L."/>
            <person name="Overbeek R."/>
            <person name="Gocayne J.D."/>
            <person name="Weidman J.F."/>
            <person name="McDonald L.A."/>
            <person name="Utterback T.R."/>
            <person name="Cotton M.D."/>
            <person name="Spriggs T."/>
            <person name="Artiach P."/>
            <person name="Kaine B.P."/>
            <person name="Sykes S.M."/>
            <person name="Sadow P.W."/>
            <person name="D'Andrea K.P."/>
            <person name="Bowman C."/>
            <person name="Fujii C."/>
            <person name="Garland S.A."/>
            <person name="Mason T.M."/>
            <person name="Olsen G.J."/>
            <person name="Fraser C.M."/>
            <person name="Smith H.O."/>
            <person name="Woese C.R."/>
            <person name="Venter J.C."/>
        </authorList>
    </citation>
    <scope>NUCLEOTIDE SEQUENCE [LARGE SCALE GENOMIC DNA]</scope>
    <source>
        <strain>ATCC 49558 / DSM 4304 / JCM 9628 / NBRC 100126 / VC-16</strain>
    </source>
</reference>
<name>Y1847_ARCFU</name>
<accession>O28431</accession>
<sequence length="83" mass="9030">MPSHCEGVSISSKEAKVLIKEHTCLVAIPILESGCVITGVDVSESELVWSIICDDEGFIALLENLEGVDFELIYKGKPPARTR</sequence>
<keyword id="KW-1185">Reference proteome</keyword>
<gene>
    <name type="ordered locus">AF_1847</name>
</gene>
<proteinExistence type="predicted"/>
<feature type="chain" id="PRO_0000128062" description="Uncharacterized protein AF_1847">
    <location>
        <begin position="1"/>
        <end position="83"/>
    </location>
</feature>
<dbReference type="EMBL" id="AE000782">
    <property type="protein sequence ID" value="AAB89407.1"/>
    <property type="molecule type" value="Genomic_DNA"/>
</dbReference>
<dbReference type="PIR" id="F69480">
    <property type="entry name" value="F69480"/>
</dbReference>
<dbReference type="RefSeq" id="WP_010879341.1">
    <property type="nucleotide sequence ID" value="NC_000917.1"/>
</dbReference>
<dbReference type="STRING" id="224325.AF_1847"/>
<dbReference type="PaxDb" id="224325-AF_1847"/>
<dbReference type="EnsemblBacteria" id="AAB89407">
    <property type="protein sequence ID" value="AAB89407"/>
    <property type="gene ID" value="AF_1847"/>
</dbReference>
<dbReference type="GeneID" id="1485068"/>
<dbReference type="KEGG" id="afu:AF_1847"/>
<dbReference type="HOGENOM" id="CLU_2534482_0_0_2"/>
<dbReference type="OrthoDB" id="51502at2157"/>
<dbReference type="Proteomes" id="UP000002199">
    <property type="component" value="Chromosome"/>
</dbReference>
<organism>
    <name type="scientific">Archaeoglobus fulgidus (strain ATCC 49558 / DSM 4304 / JCM 9628 / NBRC 100126 / VC-16)</name>
    <dbReference type="NCBI Taxonomy" id="224325"/>
    <lineage>
        <taxon>Archaea</taxon>
        <taxon>Methanobacteriati</taxon>
        <taxon>Methanobacteriota</taxon>
        <taxon>Archaeoglobi</taxon>
        <taxon>Archaeoglobales</taxon>
        <taxon>Archaeoglobaceae</taxon>
        <taxon>Archaeoglobus</taxon>
    </lineage>
</organism>
<protein>
    <recommendedName>
        <fullName>Uncharacterized protein AF_1847</fullName>
    </recommendedName>
</protein>